<evidence type="ECO:0000250" key="1"/>
<evidence type="ECO:0000255" key="2"/>
<evidence type="ECO:0000256" key="3">
    <source>
        <dbReference type="SAM" id="MobiDB-lite"/>
    </source>
</evidence>
<evidence type="ECO:0000305" key="4"/>
<keyword id="KW-0175">Coiled coil</keyword>
<keyword id="KW-0539">Nucleus</keyword>
<keyword id="KW-1185">Reference proteome</keyword>
<keyword id="KW-0687">Ribonucleoprotein</keyword>
<keyword id="KW-0690">Ribosome biogenesis</keyword>
<keyword id="KW-0698">rRNA processing</keyword>
<protein>
    <recommendedName>
        <fullName>rRNA biogenesis protein RRP36</fullName>
    </recommendedName>
    <alternativeName>
        <fullName>Ribosomal RNA-processing protein 36</fullName>
    </alternativeName>
</protein>
<feature type="chain" id="PRO_0000397639" description="rRNA biogenesis protein RRP36">
    <location>
        <begin position="1"/>
        <end position="427"/>
    </location>
</feature>
<feature type="region of interest" description="Disordered" evidence="3">
    <location>
        <begin position="1"/>
        <end position="100"/>
    </location>
</feature>
<feature type="region of interest" description="Disordered" evidence="3">
    <location>
        <begin position="146"/>
        <end position="165"/>
    </location>
</feature>
<feature type="region of interest" description="Disordered" evidence="3">
    <location>
        <begin position="178"/>
        <end position="219"/>
    </location>
</feature>
<feature type="region of interest" description="Disordered" evidence="3">
    <location>
        <begin position="280"/>
        <end position="343"/>
    </location>
</feature>
<feature type="region of interest" description="Disordered" evidence="3">
    <location>
        <begin position="364"/>
        <end position="427"/>
    </location>
</feature>
<feature type="coiled-coil region" evidence="2">
    <location>
        <begin position="261"/>
        <end position="326"/>
    </location>
</feature>
<feature type="compositionally biased region" description="Acidic residues" evidence="3">
    <location>
        <begin position="34"/>
        <end position="54"/>
    </location>
</feature>
<feature type="compositionally biased region" description="Acidic residues" evidence="3">
    <location>
        <begin position="74"/>
        <end position="99"/>
    </location>
</feature>
<feature type="compositionally biased region" description="Low complexity" evidence="3">
    <location>
        <begin position="180"/>
        <end position="202"/>
    </location>
</feature>
<feature type="compositionally biased region" description="Basic and acidic residues" evidence="3">
    <location>
        <begin position="296"/>
        <end position="341"/>
    </location>
</feature>
<feature type="compositionally biased region" description="Basic and acidic residues" evidence="3">
    <location>
        <begin position="406"/>
        <end position="419"/>
    </location>
</feature>
<proteinExistence type="inferred from homology"/>
<name>RRP36_MALGO</name>
<reference key="1">
    <citation type="journal article" date="2007" name="Proc. Natl. Acad. Sci. U.S.A.">
        <title>Dandruff-associated Malassezia genomes reveal convergent and divergent virulence traits shared with plant and human fungal pathogens.</title>
        <authorList>
            <person name="Xu J."/>
            <person name="Saunders C.W."/>
            <person name="Hu P."/>
            <person name="Grant R.A."/>
            <person name="Boekhout T."/>
            <person name="Kuramae E.E."/>
            <person name="Kronstad J.W."/>
            <person name="DeAngelis Y.M."/>
            <person name="Reeder N.L."/>
            <person name="Johnstone K.R."/>
            <person name="Leland M."/>
            <person name="Fieno A.M."/>
            <person name="Begley W.M."/>
            <person name="Sun Y."/>
            <person name="Lacey M.P."/>
            <person name="Chaudhary T."/>
            <person name="Keough T."/>
            <person name="Chu L."/>
            <person name="Sears R."/>
            <person name="Yuan B."/>
            <person name="Dawson T.L. Jr."/>
        </authorList>
    </citation>
    <scope>NUCLEOTIDE SEQUENCE [LARGE SCALE GENOMIC DNA]</scope>
    <source>
        <strain>ATCC MYA-4612 / CBS 7966</strain>
    </source>
</reference>
<gene>
    <name type="primary">RRP36</name>
    <name type="ORF">MGL_3026</name>
</gene>
<sequence>MHLRDSTKDTLASSGNRDDDEIDDGQHAQFLDADTVDSEESIEAEPVEENEEWSDQGSGAEGSDEGGGYAQYIDPDDDIDENDEEGMEVSGNDEEENSDHEEVRILVLLNSGYITAWYILAQCTDAEIESVPYDKLLKARRIMRRQSARGHATDEEDDNEHESIEAKRDLAKKKLREMYLSSHSSSSKPKLPPTSSSSSFLASRERKNAPAVMSSRRPVSRLRQVVKPIQNAKARDPRFDSLSAGPVNLDLHAKSYGFLPDLYQTEIKQLRDQHAKLKRTEIHHAGPRAKSQQAAEIRDQRAHVEQELRRAESRQNERTRRERERSVKADFKKENQRRVDAGLKPFFPKKAQFQEALLRKQFDEMAQGSGTGSSASLRKAMDRKRRKDAQKEKKSLDAALGGGSRTDIRPMRHFSDAPRPHKRGRRG</sequence>
<dbReference type="EMBL" id="AAYY01000010">
    <property type="protein sequence ID" value="EDP42826.1"/>
    <property type="molecule type" value="Genomic_DNA"/>
</dbReference>
<dbReference type="RefSeq" id="XP_001730040.1">
    <property type="nucleotide sequence ID" value="XM_001729988.1"/>
</dbReference>
<dbReference type="STRING" id="425265.A8Q6P6"/>
<dbReference type="GeneID" id="5854347"/>
<dbReference type="KEGG" id="mgl:MGL_3026"/>
<dbReference type="VEuPathDB" id="FungiDB:MGL_3026"/>
<dbReference type="InParanoid" id="A8Q6P6"/>
<dbReference type="OrthoDB" id="448446at2759"/>
<dbReference type="Proteomes" id="UP000008837">
    <property type="component" value="Unassembled WGS sequence"/>
</dbReference>
<dbReference type="GO" id="GO:0030686">
    <property type="term" value="C:90S preribosome"/>
    <property type="evidence" value="ECO:0007669"/>
    <property type="project" value="TreeGrafter"/>
</dbReference>
<dbReference type="GO" id="GO:0005730">
    <property type="term" value="C:nucleolus"/>
    <property type="evidence" value="ECO:0007669"/>
    <property type="project" value="UniProtKB-SubCell"/>
</dbReference>
<dbReference type="GO" id="GO:0000462">
    <property type="term" value="P:maturation of SSU-rRNA from tricistronic rRNA transcript (SSU-rRNA, 5.8S rRNA, LSU-rRNA)"/>
    <property type="evidence" value="ECO:0007669"/>
    <property type="project" value="TreeGrafter"/>
</dbReference>
<dbReference type="InterPro" id="IPR009292">
    <property type="entry name" value="RRP36"/>
</dbReference>
<dbReference type="PANTHER" id="PTHR21738">
    <property type="entry name" value="RIBOSOMAL RNA PROCESSING PROTEIN 36 HOMOLOG"/>
    <property type="match status" value="1"/>
</dbReference>
<dbReference type="PANTHER" id="PTHR21738:SF0">
    <property type="entry name" value="RIBOSOMAL RNA PROCESSING PROTEIN 36 HOMOLOG"/>
    <property type="match status" value="1"/>
</dbReference>
<dbReference type="Pfam" id="PF06102">
    <property type="entry name" value="RRP36"/>
    <property type="match status" value="1"/>
</dbReference>
<comment type="function">
    <text evidence="1">Component of the 90S pre-ribosome involved in the maturation of rRNAs. Required for early cleavages of the pre-RNAs in the 40S ribosomal subunit maturation pathway (By similarity).</text>
</comment>
<comment type="subunit">
    <text evidence="1">Associates with 90S and pre-40S pre-ribosomal particles.</text>
</comment>
<comment type="subcellular location">
    <subcellularLocation>
        <location evidence="1">Nucleus</location>
        <location evidence="1">Nucleolus</location>
    </subcellularLocation>
</comment>
<comment type="similarity">
    <text evidence="4">Belongs to the RRP36 family.</text>
</comment>
<accession>A8Q6P6</accession>
<organism>
    <name type="scientific">Malassezia globosa (strain ATCC MYA-4612 / CBS 7966)</name>
    <name type="common">Dandruff-associated fungus</name>
    <dbReference type="NCBI Taxonomy" id="425265"/>
    <lineage>
        <taxon>Eukaryota</taxon>
        <taxon>Fungi</taxon>
        <taxon>Dikarya</taxon>
        <taxon>Basidiomycota</taxon>
        <taxon>Ustilaginomycotina</taxon>
        <taxon>Malasseziomycetes</taxon>
        <taxon>Malasseziales</taxon>
        <taxon>Malasseziaceae</taxon>
        <taxon>Malassezia</taxon>
    </lineage>
</organism>